<organism>
    <name type="scientific">Staphylococcus aureus (strain MRSA252)</name>
    <dbReference type="NCBI Taxonomy" id="282458"/>
    <lineage>
        <taxon>Bacteria</taxon>
        <taxon>Bacillati</taxon>
        <taxon>Bacillota</taxon>
        <taxon>Bacilli</taxon>
        <taxon>Bacillales</taxon>
        <taxon>Staphylococcaceae</taxon>
        <taxon>Staphylococcus</taxon>
    </lineage>
</organism>
<reference key="1">
    <citation type="journal article" date="2004" name="Proc. Natl. Acad. Sci. U.S.A.">
        <title>Complete genomes of two clinical Staphylococcus aureus strains: evidence for the rapid evolution of virulence and drug resistance.</title>
        <authorList>
            <person name="Holden M.T.G."/>
            <person name="Feil E.J."/>
            <person name="Lindsay J.A."/>
            <person name="Peacock S.J."/>
            <person name="Day N.P.J."/>
            <person name="Enright M.C."/>
            <person name="Foster T.J."/>
            <person name="Moore C.E."/>
            <person name="Hurst L."/>
            <person name="Atkin R."/>
            <person name="Barron A."/>
            <person name="Bason N."/>
            <person name="Bentley S.D."/>
            <person name="Chillingworth C."/>
            <person name="Chillingworth T."/>
            <person name="Churcher C."/>
            <person name="Clark L."/>
            <person name="Corton C."/>
            <person name="Cronin A."/>
            <person name="Doggett J."/>
            <person name="Dowd L."/>
            <person name="Feltwell T."/>
            <person name="Hance Z."/>
            <person name="Harris B."/>
            <person name="Hauser H."/>
            <person name="Holroyd S."/>
            <person name="Jagels K."/>
            <person name="James K.D."/>
            <person name="Lennard N."/>
            <person name="Line A."/>
            <person name="Mayes R."/>
            <person name="Moule S."/>
            <person name="Mungall K."/>
            <person name="Ormond D."/>
            <person name="Quail M.A."/>
            <person name="Rabbinowitsch E."/>
            <person name="Rutherford K.M."/>
            <person name="Sanders M."/>
            <person name="Sharp S."/>
            <person name="Simmonds M."/>
            <person name="Stevens K."/>
            <person name="Whitehead S."/>
            <person name="Barrell B.G."/>
            <person name="Spratt B.G."/>
            <person name="Parkhill J."/>
        </authorList>
    </citation>
    <scope>NUCLEOTIDE SEQUENCE [LARGE SCALE GENOMIC DNA]</scope>
    <source>
        <strain>MRSA252</strain>
    </source>
</reference>
<evidence type="ECO:0000255" key="1">
    <source>
        <dbReference type="HAMAP-Rule" id="MF_00149"/>
    </source>
</evidence>
<evidence type="ECO:0000256" key="2">
    <source>
        <dbReference type="SAM" id="MobiDB-lite"/>
    </source>
</evidence>
<comment type="function">
    <text evidence="1">This protein is involved in the repair of mismatches in DNA. It is required for dam-dependent methyl-directed DNA mismatch repair. May act as a 'molecular matchmaker', a protein that promotes the formation of a stable complex between two or more DNA-binding proteins in an ATP-dependent manner without itself being part of a final effector complex.</text>
</comment>
<comment type="similarity">
    <text evidence="1">Belongs to the DNA mismatch repair MutL/HexB family.</text>
</comment>
<sequence>MGKIKELQTSLANKIAAGEVVERPSSVVKELLENAIDAGATEISIEVEESGVQSIRVVDNGSGIEAEDLGLVFHRHATSKLDQDEDLFHIRTLGFRGEALASISSVAKVTLKTCTDNANGNEIYVENGEILNHKPAKAKKGTDILVESLFYNTPARLKYIKSLYTELGKITDIVNRMAMSHPDIRIALISDGKTMLSTNGSGRTNEVMAEIYGMKVARDLVHISGDTSDYHIEGFVAKPEHSRSNKHYISIFINGRYIKNFMLNKAILEGYHTLLTIGRFPICYINIEMDPILVDVNVHPTKLEVRLSKEEQLYQLIVSKIQEAFKDRILIPKNNLDYVPKKNKVLHSFEQQKIEFEQRQNTENKQEKTFSSEESNSKPFMAENQNDEIVIKEDSYNPFVTKTSESLIADDESSGYNNTREKDEDYFKKQQEILQEMDQTFDSNDDTSVQNYENKASDDYYDVNDIKGTKSKDPKRRIPYMEIVGQVHGTYIIAQNEFGMYMIDQHAAQERIKYEYFRDKIGEVTNEIQDLLIPLTFHFSKDEQLVIDQYKNELQQVGIMLEHFGGHDYIVSSYPVWFPKDEVEEIIKDMIELILEEKKVDIKKLREDVAIMMSCKKSIKANHYLQKHEMSDLIDQLREAEDPFTCPHGRPIIINFSKYELEKLFKRVM</sequence>
<proteinExistence type="inferred from homology"/>
<name>MUTL_STAAR</name>
<gene>
    <name evidence="1" type="primary">mutL</name>
    <name type="ordered locus">SAR1272</name>
</gene>
<dbReference type="EMBL" id="BX571856">
    <property type="protein sequence ID" value="CAG40274.1"/>
    <property type="molecule type" value="Genomic_DNA"/>
</dbReference>
<dbReference type="RefSeq" id="WP_000516249.1">
    <property type="nucleotide sequence ID" value="NC_002952.2"/>
</dbReference>
<dbReference type="SMR" id="Q6GHD9"/>
<dbReference type="KEGG" id="sar:SAR1272"/>
<dbReference type="HOGENOM" id="CLU_004131_4_1_9"/>
<dbReference type="Proteomes" id="UP000000596">
    <property type="component" value="Chromosome"/>
</dbReference>
<dbReference type="GO" id="GO:0032300">
    <property type="term" value="C:mismatch repair complex"/>
    <property type="evidence" value="ECO:0007669"/>
    <property type="project" value="InterPro"/>
</dbReference>
<dbReference type="GO" id="GO:0005524">
    <property type="term" value="F:ATP binding"/>
    <property type="evidence" value="ECO:0007669"/>
    <property type="project" value="InterPro"/>
</dbReference>
<dbReference type="GO" id="GO:0016887">
    <property type="term" value="F:ATP hydrolysis activity"/>
    <property type="evidence" value="ECO:0007669"/>
    <property type="project" value="InterPro"/>
</dbReference>
<dbReference type="GO" id="GO:0140664">
    <property type="term" value="F:ATP-dependent DNA damage sensor activity"/>
    <property type="evidence" value="ECO:0007669"/>
    <property type="project" value="InterPro"/>
</dbReference>
<dbReference type="GO" id="GO:0030983">
    <property type="term" value="F:mismatched DNA binding"/>
    <property type="evidence" value="ECO:0007669"/>
    <property type="project" value="InterPro"/>
</dbReference>
<dbReference type="GO" id="GO:0006298">
    <property type="term" value="P:mismatch repair"/>
    <property type="evidence" value="ECO:0007669"/>
    <property type="project" value="UniProtKB-UniRule"/>
</dbReference>
<dbReference type="CDD" id="cd16926">
    <property type="entry name" value="HATPase_MutL-MLH-PMS-like"/>
    <property type="match status" value="1"/>
</dbReference>
<dbReference type="CDD" id="cd00782">
    <property type="entry name" value="MutL_Trans"/>
    <property type="match status" value="1"/>
</dbReference>
<dbReference type="FunFam" id="3.30.1370.100:FF:000004">
    <property type="entry name" value="DNA mismatch repair endonuclease MutL"/>
    <property type="match status" value="1"/>
</dbReference>
<dbReference type="FunFam" id="3.30.230.10:FF:000036">
    <property type="entry name" value="DNA mismatch repair endonuclease MutL"/>
    <property type="match status" value="1"/>
</dbReference>
<dbReference type="FunFam" id="3.30.565.10:FF:000003">
    <property type="entry name" value="DNA mismatch repair endonuclease MutL"/>
    <property type="match status" value="1"/>
</dbReference>
<dbReference type="Gene3D" id="3.30.230.10">
    <property type="match status" value="1"/>
</dbReference>
<dbReference type="Gene3D" id="3.30.565.10">
    <property type="entry name" value="Histidine kinase-like ATPase, C-terminal domain"/>
    <property type="match status" value="1"/>
</dbReference>
<dbReference type="Gene3D" id="3.30.1540.20">
    <property type="entry name" value="MutL, C-terminal domain, dimerisation subdomain"/>
    <property type="match status" value="1"/>
</dbReference>
<dbReference type="Gene3D" id="3.30.1370.100">
    <property type="entry name" value="MutL, C-terminal domain, regulatory subdomain"/>
    <property type="match status" value="1"/>
</dbReference>
<dbReference type="HAMAP" id="MF_00149">
    <property type="entry name" value="DNA_mis_repair"/>
    <property type="match status" value="1"/>
</dbReference>
<dbReference type="InterPro" id="IPR014762">
    <property type="entry name" value="DNA_mismatch_repair_CS"/>
</dbReference>
<dbReference type="InterPro" id="IPR020667">
    <property type="entry name" value="DNA_mismatch_repair_MutL"/>
</dbReference>
<dbReference type="InterPro" id="IPR013507">
    <property type="entry name" value="DNA_mismatch_S5_2-like"/>
</dbReference>
<dbReference type="InterPro" id="IPR036890">
    <property type="entry name" value="HATPase_C_sf"/>
</dbReference>
<dbReference type="InterPro" id="IPR002099">
    <property type="entry name" value="MutL/Mlh/PMS"/>
</dbReference>
<dbReference type="InterPro" id="IPR038973">
    <property type="entry name" value="MutL/Mlh/Pms-like"/>
</dbReference>
<dbReference type="InterPro" id="IPR014790">
    <property type="entry name" value="MutL_C"/>
</dbReference>
<dbReference type="InterPro" id="IPR042120">
    <property type="entry name" value="MutL_C_dimsub"/>
</dbReference>
<dbReference type="InterPro" id="IPR042121">
    <property type="entry name" value="MutL_C_regsub"/>
</dbReference>
<dbReference type="InterPro" id="IPR037198">
    <property type="entry name" value="MutL_C_sf"/>
</dbReference>
<dbReference type="InterPro" id="IPR020568">
    <property type="entry name" value="Ribosomal_Su5_D2-typ_SF"/>
</dbReference>
<dbReference type="InterPro" id="IPR014721">
    <property type="entry name" value="Ribsml_uS5_D2-typ_fold_subgr"/>
</dbReference>
<dbReference type="NCBIfam" id="TIGR00585">
    <property type="entry name" value="mutl"/>
    <property type="match status" value="1"/>
</dbReference>
<dbReference type="NCBIfam" id="NF000950">
    <property type="entry name" value="PRK00095.1-3"/>
    <property type="match status" value="1"/>
</dbReference>
<dbReference type="PANTHER" id="PTHR10073">
    <property type="entry name" value="DNA MISMATCH REPAIR PROTEIN MLH, PMS, MUTL"/>
    <property type="match status" value="1"/>
</dbReference>
<dbReference type="PANTHER" id="PTHR10073:SF12">
    <property type="entry name" value="DNA MISMATCH REPAIR PROTEIN MLH1"/>
    <property type="match status" value="1"/>
</dbReference>
<dbReference type="Pfam" id="PF01119">
    <property type="entry name" value="DNA_mis_repair"/>
    <property type="match status" value="1"/>
</dbReference>
<dbReference type="Pfam" id="PF13589">
    <property type="entry name" value="HATPase_c_3"/>
    <property type="match status" value="1"/>
</dbReference>
<dbReference type="Pfam" id="PF08676">
    <property type="entry name" value="MutL_C"/>
    <property type="match status" value="1"/>
</dbReference>
<dbReference type="SMART" id="SM01340">
    <property type="entry name" value="DNA_mis_repair"/>
    <property type="match status" value="1"/>
</dbReference>
<dbReference type="SMART" id="SM00853">
    <property type="entry name" value="MutL_C"/>
    <property type="match status" value="1"/>
</dbReference>
<dbReference type="SUPFAM" id="SSF55874">
    <property type="entry name" value="ATPase domain of HSP90 chaperone/DNA topoisomerase II/histidine kinase"/>
    <property type="match status" value="1"/>
</dbReference>
<dbReference type="SUPFAM" id="SSF118116">
    <property type="entry name" value="DNA mismatch repair protein MutL"/>
    <property type="match status" value="1"/>
</dbReference>
<dbReference type="SUPFAM" id="SSF54211">
    <property type="entry name" value="Ribosomal protein S5 domain 2-like"/>
    <property type="match status" value="1"/>
</dbReference>
<dbReference type="PROSITE" id="PS00058">
    <property type="entry name" value="DNA_MISMATCH_REPAIR_1"/>
    <property type="match status" value="1"/>
</dbReference>
<accession>Q6GHD9</accession>
<feature type="chain" id="PRO_0000177971" description="DNA mismatch repair protein MutL">
    <location>
        <begin position="1"/>
        <end position="669"/>
    </location>
</feature>
<feature type="region of interest" description="Disordered" evidence="2">
    <location>
        <begin position="356"/>
        <end position="379"/>
    </location>
</feature>
<feature type="compositionally biased region" description="Basic and acidic residues" evidence="2">
    <location>
        <begin position="356"/>
        <end position="371"/>
    </location>
</feature>
<protein>
    <recommendedName>
        <fullName evidence="1">DNA mismatch repair protein MutL</fullName>
    </recommendedName>
</protein>
<keyword id="KW-0227">DNA damage</keyword>
<keyword id="KW-0234">DNA repair</keyword>